<reference key="1">
    <citation type="journal article" date="2001" name="Proc. Natl. Acad. Sci. U.S.A.">
        <title>Genome sequence of an industrial microorganism Streptomyces avermitilis: deducing the ability of producing secondary metabolites.</title>
        <authorList>
            <person name="Omura S."/>
            <person name="Ikeda H."/>
            <person name="Ishikawa J."/>
            <person name="Hanamoto A."/>
            <person name="Takahashi C."/>
            <person name="Shinose M."/>
            <person name="Takahashi Y."/>
            <person name="Horikawa H."/>
            <person name="Nakazawa H."/>
            <person name="Osonoe T."/>
            <person name="Kikuchi H."/>
            <person name="Shiba T."/>
            <person name="Sakaki Y."/>
            <person name="Hattori M."/>
        </authorList>
    </citation>
    <scope>NUCLEOTIDE SEQUENCE [LARGE SCALE GENOMIC DNA]</scope>
    <source>
        <strain>ATCC 31267 / DSM 46492 / JCM 5070 / NBRC 14893 / NCIMB 12804 / NRRL 8165 / MA-4680</strain>
    </source>
</reference>
<reference key="2">
    <citation type="journal article" date="2003" name="Nat. Biotechnol.">
        <title>Complete genome sequence and comparative analysis of the industrial microorganism Streptomyces avermitilis.</title>
        <authorList>
            <person name="Ikeda H."/>
            <person name="Ishikawa J."/>
            <person name="Hanamoto A."/>
            <person name="Shinose M."/>
            <person name="Kikuchi H."/>
            <person name="Shiba T."/>
            <person name="Sakaki Y."/>
            <person name="Hattori M."/>
            <person name="Omura S."/>
        </authorList>
    </citation>
    <scope>NUCLEOTIDE SEQUENCE [LARGE SCALE GENOMIC DNA]</scope>
    <source>
        <strain>ATCC 31267 / DSM 46492 / JCM 5070 / NBRC 14893 / NCIMB 12804 / NRRL 8165 / MA-4680</strain>
    </source>
</reference>
<keyword id="KW-0067">ATP-binding</keyword>
<keyword id="KW-0173">Coenzyme A biosynthesis</keyword>
<keyword id="KW-0963">Cytoplasm</keyword>
<keyword id="KW-0418">Kinase</keyword>
<keyword id="KW-0479">Metal-binding</keyword>
<keyword id="KW-0547">Nucleotide-binding</keyword>
<keyword id="KW-0630">Potassium</keyword>
<keyword id="KW-1185">Reference proteome</keyword>
<keyword id="KW-0808">Transferase</keyword>
<sequence>MLLTIDVGNTHTVLGLFDGEDIVEHWRISTDARRTADELAVLLQGLMGMHPLLGEELGDGIDGIAICSTVPSVLHELREVTRRYYGDVPAVLVEPGIKTGVPILMDNPKEVGADRIINAVAAVELYGGPAIVVDFGTATTFDAVSARGEYAGGVIAPGIEISVEALGVRGAQLRKIELARPRAVIGKNTVEAMQAGIVYGFAGQVDGVVTRMARELADDPDDVTVIATGGLAPMVLGEASVIDEHEPWLTLIGLRLVYERNISRT</sequence>
<organism>
    <name type="scientific">Streptomyces avermitilis (strain ATCC 31267 / DSM 46492 / JCM 5070 / NBRC 14893 / NCIMB 12804 / NRRL 8165 / MA-4680)</name>
    <dbReference type="NCBI Taxonomy" id="227882"/>
    <lineage>
        <taxon>Bacteria</taxon>
        <taxon>Bacillati</taxon>
        <taxon>Actinomycetota</taxon>
        <taxon>Actinomycetes</taxon>
        <taxon>Kitasatosporales</taxon>
        <taxon>Streptomycetaceae</taxon>
        <taxon>Streptomyces</taxon>
    </lineage>
</organism>
<feature type="chain" id="PRO_0000267590" description="Type III pantothenate kinase">
    <location>
        <begin position="1"/>
        <end position="265"/>
    </location>
</feature>
<feature type="active site" description="Proton acceptor" evidence="1">
    <location>
        <position position="114"/>
    </location>
</feature>
<feature type="binding site" evidence="1">
    <location>
        <begin position="6"/>
        <end position="13"/>
    </location>
    <ligand>
        <name>ATP</name>
        <dbReference type="ChEBI" id="CHEBI:30616"/>
    </ligand>
</feature>
<feature type="binding site" evidence="1">
    <location>
        <begin position="112"/>
        <end position="115"/>
    </location>
    <ligand>
        <name>substrate</name>
    </ligand>
</feature>
<feature type="binding site" evidence="1">
    <location>
        <position position="134"/>
    </location>
    <ligand>
        <name>K(+)</name>
        <dbReference type="ChEBI" id="CHEBI:29103"/>
    </ligand>
</feature>
<feature type="binding site" evidence="1">
    <location>
        <position position="137"/>
    </location>
    <ligand>
        <name>ATP</name>
        <dbReference type="ChEBI" id="CHEBI:30616"/>
    </ligand>
</feature>
<feature type="binding site" evidence="1">
    <location>
        <position position="189"/>
    </location>
    <ligand>
        <name>substrate</name>
    </ligand>
</feature>
<dbReference type="EC" id="2.7.1.33" evidence="1"/>
<dbReference type="EMBL" id="BA000030">
    <property type="protein sequence ID" value="BAC72402.1"/>
    <property type="molecule type" value="Genomic_DNA"/>
</dbReference>
<dbReference type="RefSeq" id="WP_010986114.1">
    <property type="nucleotide sequence ID" value="NZ_JZJK01000062.1"/>
</dbReference>
<dbReference type="SMR" id="Q82EC5"/>
<dbReference type="GeneID" id="41541771"/>
<dbReference type="KEGG" id="sma:SAVERM_4690"/>
<dbReference type="eggNOG" id="COG1521">
    <property type="taxonomic scope" value="Bacteria"/>
</dbReference>
<dbReference type="HOGENOM" id="CLU_066627_1_0_11"/>
<dbReference type="OrthoDB" id="9804707at2"/>
<dbReference type="UniPathway" id="UPA00241">
    <property type="reaction ID" value="UER00352"/>
</dbReference>
<dbReference type="Proteomes" id="UP000000428">
    <property type="component" value="Chromosome"/>
</dbReference>
<dbReference type="GO" id="GO:0005737">
    <property type="term" value="C:cytoplasm"/>
    <property type="evidence" value="ECO:0007669"/>
    <property type="project" value="UniProtKB-SubCell"/>
</dbReference>
<dbReference type="GO" id="GO:0005524">
    <property type="term" value="F:ATP binding"/>
    <property type="evidence" value="ECO:0007669"/>
    <property type="project" value="UniProtKB-UniRule"/>
</dbReference>
<dbReference type="GO" id="GO:0046872">
    <property type="term" value="F:metal ion binding"/>
    <property type="evidence" value="ECO:0007669"/>
    <property type="project" value="UniProtKB-KW"/>
</dbReference>
<dbReference type="GO" id="GO:0004594">
    <property type="term" value="F:pantothenate kinase activity"/>
    <property type="evidence" value="ECO:0007669"/>
    <property type="project" value="UniProtKB-UniRule"/>
</dbReference>
<dbReference type="GO" id="GO:0015937">
    <property type="term" value="P:coenzyme A biosynthetic process"/>
    <property type="evidence" value="ECO:0007669"/>
    <property type="project" value="UniProtKB-UniRule"/>
</dbReference>
<dbReference type="CDD" id="cd24015">
    <property type="entry name" value="ASKHA_NBD_PanK-III"/>
    <property type="match status" value="1"/>
</dbReference>
<dbReference type="Gene3D" id="3.30.420.40">
    <property type="match status" value="2"/>
</dbReference>
<dbReference type="HAMAP" id="MF_01274">
    <property type="entry name" value="Pantothen_kinase_3"/>
    <property type="match status" value="1"/>
</dbReference>
<dbReference type="InterPro" id="IPR043129">
    <property type="entry name" value="ATPase_NBD"/>
</dbReference>
<dbReference type="InterPro" id="IPR004619">
    <property type="entry name" value="Type_III_PanK"/>
</dbReference>
<dbReference type="NCBIfam" id="TIGR00671">
    <property type="entry name" value="baf"/>
    <property type="match status" value="1"/>
</dbReference>
<dbReference type="NCBIfam" id="NF009845">
    <property type="entry name" value="PRK13318.1-3"/>
    <property type="match status" value="1"/>
</dbReference>
<dbReference type="NCBIfam" id="NF009855">
    <property type="entry name" value="PRK13321.1"/>
    <property type="match status" value="1"/>
</dbReference>
<dbReference type="PANTHER" id="PTHR34265">
    <property type="entry name" value="TYPE III PANTOTHENATE KINASE"/>
    <property type="match status" value="1"/>
</dbReference>
<dbReference type="PANTHER" id="PTHR34265:SF1">
    <property type="entry name" value="TYPE III PANTOTHENATE KINASE"/>
    <property type="match status" value="1"/>
</dbReference>
<dbReference type="Pfam" id="PF03309">
    <property type="entry name" value="Pan_kinase"/>
    <property type="match status" value="1"/>
</dbReference>
<dbReference type="SUPFAM" id="SSF53067">
    <property type="entry name" value="Actin-like ATPase domain"/>
    <property type="match status" value="2"/>
</dbReference>
<comment type="function">
    <text evidence="1">Catalyzes the phosphorylation of pantothenate (Pan), the first step in CoA biosynthesis.</text>
</comment>
<comment type="catalytic activity">
    <reaction evidence="1">
        <text>(R)-pantothenate + ATP = (R)-4'-phosphopantothenate + ADP + H(+)</text>
        <dbReference type="Rhea" id="RHEA:16373"/>
        <dbReference type="ChEBI" id="CHEBI:10986"/>
        <dbReference type="ChEBI" id="CHEBI:15378"/>
        <dbReference type="ChEBI" id="CHEBI:29032"/>
        <dbReference type="ChEBI" id="CHEBI:30616"/>
        <dbReference type="ChEBI" id="CHEBI:456216"/>
        <dbReference type="EC" id="2.7.1.33"/>
    </reaction>
</comment>
<comment type="cofactor">
    <cofactor evidence="1">
        <name>NH4(+)</name>
        <dbReference type="ChEBI" id="CHEBI:28938"/>
    </cofactor>
    <cofactor evidence="1">
        <name>K(+)</name>
        <dbReference type="ChEBI" id="CHEBI:29103"/>
    </cofactor>
    <text evidence="1">A monovalent cation. Ammonium or potassium.</text>
</comment>
<comment type="pathway">
    <text evidence="1">Cofactor biosynthesis; coenzyme A biosynthesis; CoA from (R)-pantothenate: step 1/5.</text>
</comment>
<comment type="subunit">
    <text evidence="1">Homodimer.</text>
</comment>
<comment type="subcellular location">
    <subcellularLocation>
        <location evidence="1">Cytoplasm</location>
    </subcellularLocation>
</comment>
<comment type="similarity">
    <text evidence="1">Belongs to the type III pantothenate kinase family.</text>
</comment>
<name>COAX_STRAW</name>
<gene>
    <name evidence="1" type="primary">coaX</name>
    <name type="ordered locus">SAV_4690</name>
</gene>
<proteinExistence type="inferred from homology"/>
<accession>Q82EC5</accession>
<evidence type="ECO:0000255" key="1">
    <source>
        <dbReference type="HAMAP-Rule" id="MF_01274"/>
    </source>
</evidence>
<protein>
    <recommendedName>
        <fullName evidence="1">Type III pantothenate kinase</fullName>
        <ecNumber evidence="1">2.7.1.33</ecNumber>
    </recommendedName>
    <alternativeName>
        <fullName evidence="1">PanK-III</fullName>
    </alternativeName>
    <alternativeName>
        <fullName evidence="1">Pantothenic acid kinase</fullName>
    </alternativeName>
</protein>